<name>EPO_CANLF</name>
<gene>
    <name type="primary">EPO</name>
</gene>
<feature type="signal peptide" evidence="1">
    <location>
        <begin position="1"/>
        <end position="40"/>
    </location>
</feature>
<feature type="chain" id="PRO_0000008398" description="Erythropoietin">
    <location>
        <begin position="41"/>
        <end position="206"/>
    </location>
</feature>
<feature type="glycosylation site" description="N-linked (GlcNAc...) asparagine" evidence="3">
    <location>
        <position position="64"/>
    </location>
</feature>
<feature type="glycosylation site" description="N-linked (GlcNAc...) asparagine" evidence="3">
    <location>
        <position position="78"/>
    </location>
</feature>
<feature type="glycosylation site" description="N-linked (GlcNAc...) asparagine" evidence="3">
    <location>
        <position position="123"/>
    </location>
</feature>
<feature type="disulfide bond" evidence="1">
    <location>
        <begin position="47"/>
        <end position="201"/>
    </location>
</feature>
<feature type="disulfide bond" evidence="1">
    <location>
        <begin position="69"/>
        <end position="73"/>
    </location>
</feature>
<dbReference type="EMBL" id="AY572971">
    <property type="protein sequence ID" value="AAS77874.1"/>
    <property type="molecule type" value="mRNA"/>
</dbReference>
<dbReference type="EMBL" id="L13027">
    <property type="protein sequence ID" value="AAA30842.1"/>
    <property type="molecule type" value="mRNA"/>
</dbReference>
<dbReference type="PIR" id="I46199">
    <property type="entry name" value="I46199"/>
</dbReference>
<dbReference type="RefSeq" id="NP_001006647.1">
    <property type="nucleotide sequence ID" value="NM_001006646.1"/>
</dbReference>
<dbReference type="SMR" id="P33707"/>
<dbReference type="FunCoup" id="P33707">
    <property type="interactions" value="103"/>
</dbReference>
<dbReference type="STRING" id="9615.ENSCAFP00000020937"/>
<dbReference type="GlyCosmos" id="P33707">
    <property type="glycosylation" value="3 sites, No reported glycans"/>
</dbReference>
<dbReference type="PaxDb" id="9612-ENSCAFP00000038507"/>
<dbReference type="eggNOG" id="ENOG502RXRC">
    <property type="taxonomic scope" value="Eukaryota"/>
</dbReference>
<dbReference type="InParanoid" id="P33707"/>
<dbReference type="OrthoDB" id="9892121at2759"/>
<dbReference type="Proteomes" id="UP000002254">
    <property type="component" value="Unplaced"/>
</dbReference>
<dbReference type="Proteomes" id="UP000694429">
    <property type="component" value="Unplaced"/>
</dbReference>
<dbReference type="Proteomes" id="UP000694542">
    <property type="component" value="Unplaced"/>
</dbReference>
<dbReference type="Proteomes" id="UP000805418">
    <property type="component" value="Unplaced"/>
</dbReference>
<dbReference type="GO" id="GO:0005615">
    <property type="term" value="C:extracellular space"/>
    <property type="evidence" value="ECO:0000318"/>
    <property type="project" value="GO_Central"/>
</dbReference>
<dbReference type="GO" id="GO:0005125">
    <property type="term" value="F:cytokine activity"/>
    <property type="evidence" value="ECO:0000318"/>
    <property type="project" value="GO_Central"/>
</dbReference>
<dbReference type="GO" id="GO:0005128">
    <property type="term" value="F:erythropoietin receptor binding"/>
    <property type="evidence" value="ECO:0000250"/>
    <property type="project" value="UniProtKB"/>
</dbReference>
<dbReference type="GO" id="GO:0005179">
    <property type="term" value="F:hormone activity"/>
    <property type="evidence" value="ECO:0007669"/>
    <property type="project" value="UniProtKB-KW"/>
</dbReference>
<dbReference type="GO" id="GO:0030295">
    <property type="term" value="F:protein kinase activator activity"/>
    <property type="evidence" value="ECO:0000318"/>
    <property type="project" value="GO_Central"/>
</dbReference>
<dbReference type="GO" id="GO:0030218">
    <property type="term" value="P:erythrocyte differentiation"/>
    <property type="evidence" value="ECO:0000250"/>
    <property type="project" value="UniProtKB"/>
</dbReference>
<dbReference type="GO" id="GO:0043249">
    <property type="term" value="P:erythrocyte maturation"/>
    <property type="evidence" value="ECO:0007669"/>
    <property type="project" value="UniProtKB-KW"/>
</dbReference>
<dbReference type="GO" id="GO:0038162">
    <property type="term" value="P:erythropoietin-mediated signaling pathway"/>
    <property type="evidence" value="ECO:0000250"/>
    <property type="project" value="UniProtKB"/>
</dbReference>
<dbReference type="GO" id="GO:0008284">
    <property type="term" value="P:positive regulation of cell population proliferation"/>
    <property type="evidence" value="ECO:0000318"/>
    <property type="project" value="GO_Central"/>
</dbReference>
<dbReference type="GO" id="GO:0046579">
    <property type="term" value="P:positive regulation of Ras protein signal transduction"/>
    <property type="evidence" value="ECO:0000318"/>
    <property type="project" value="GO_Central"/>
</dbReference>
<dbReference type="FunFam" id="1.20.1250.10:FF:000013">
    <property type="entry name" value="Erythropoietin"/>
    <property type="match status" value="1"/>
</dbReference>
<dbReference type="Gene3D" id="1.20.1250.10">
    <property type="match status" value="1"/>
</dbReference>
<dbReference type="InterPro" id="IPR009079">
    <property type="entry name" value="4_helix_cytokine-like_core"/>
</dbReference>
<dbReference type="InterPro" id="IPR019767">
    <property type="entry name" value="EPO/TPO_CS"/>
</dbReference>
<dbReference type="InterPro" id="IPR001323">
    <property type="entry name" value="EPO_TPO"/>
</dbReference>
<dbReference type="InterPro" id="IPR003013">
    <property type="entry name" value="Erythroptn"/>
</dbReference>
<dbReference type="PANTHER" id="PTHR10370">
    <property type="entry name" value="ERYTHROPOIETIN"/>
    <property type="match status" value="1"/>
</dbReference>
<dbReference type="PANTHER" id="PTHR10370:SF0">
    <property type="entry name" value="ERYTHROPOIETIN"/>
    <property type="match status" value="1"/>
</dbReference>
<dbReference type="Pfam" id="PF00758">
    <property type="entry name" value="EPO_TPO"/>
    <property type="match status" value="1"/>
</dbReference>
<dbReference type="PIRSF" id="PIRSF001951">
    <property type="entry name" value="EPO"/>
    <property type="match status" value="1"/>
</dbReference>
<dbReference type="PRINTS" id="PR00272">
    <property type="entry name" value="ERYTHROPTN"/>
</dbReference>
<dbReference type="SUPFAM" id="SSF47266">
    <property type="entry name" value="4-helical cytokines"/>
    <property type="match status" value="1"/>
</dbReference>
<dbReference type="PROSITE" id="PS00817">
    <property type="entry name" value="EPO_TPO"/>
    <property type="match status" value="1"/>
</dbReference>
<protein>
    <recommendedName>
        <fullName>Erythropoietin</fullName>
    </recommendedName>
</protein>
<evidence type="ECO:0000250" key="1"/>
<evidence type="ECO:0000250" key="2">
    <source>
        <dbReference type="UniProtKB" id="P01588"/>
    </source>
</evidence>
<evidence type="ECO:0000255" key="3"/>
<evidence type="ECO:0000305" key="4"/>
<organism>
    <name type="scientific">Canis lupus familiaris</name>
    <name type="common">Dog</name>
    <name type="synonym">Canis familiaris</name>
    <dbReference type="NCBI Taxonomy" id="9615"/>
    <lineage>
        <taxon>Eukaryota</taxon>
        <taxon>Metazoa</taxon>
        <taxon>Chordata</taxon>
        <taxon>Craniata</taxon>
        <taxon>Vertebrata</taxon>
        <taxon>Euteleostomi</taxon>
        <taxon>Mammalia</taxon>
        <taxon>Eutheria</taxon>
        <taxon>Laurasiatheria</taxon>
        <taxon>Carnivora</taxon>
        <taxon>Caniformia</taxon>
        <taxon>Canidae</taxon>
        <taxon>Canis</taxon>
    </lineage>
</organism>
<accession>P33707</accession>
<accession>Q6PWU5</accession>
<proteinExistence type="evidence at transcript level"/>
<sequence>MCEPAPPKPTQSAWHSFPECPALLLLLSLLLLPLGLPVLGAPPRLICDSRVLERYILEAREAENVTMGCAQGCSFSENITVPDTKVNFYTWKRMDVGQQALEVWQGLALLSEAILRGQALLANASQPSETPQLHVDKAVSSLRSLTSLLRALGAQKEAMSLPEEASPAPLRTFTVDTLCKLFRIYSNFLRGKLTLYTGEACRRGDR</sequence>
<keyword id="KW-1015">Disulfide bond</keyword>
<keyword id="KW-0265">Erythrocyte maturation</keyword>
<keyword id="KW-0325">Glycoprotein</keyword>
<keyword id="KW-0372">Hormone</keyword>
<keyword id="KW-1185">Reference proteome</keyword>
<keyword id="KW-0964">Secreted</keyword>
<keyword id="KW-0732">Signal</keyword>
<comment type="function">
    <text evidence="2">Hormone involved in the regulation of erythrocyte proliferation and differentiation and the maintenance of a physiological level of circulating erythrocyte mass. Binds to EPOR leading to EPOR dimerization and JAK2 activation thereby activating specific downstream effectors, including STAT1 and STAT3.</text>
</comment>
<comment type="subcellular location">
    <subcellularLocation>
        <location>Secreted</location>
    </subcellularLocation>
</comment>
<comment type="tissue specificity">
    <text>Produced by kidney or liver of adult mammals and by liver of fetal or neonatal mammals.</text>
</comment>
<comment type="similarity">
    <text evidence="4">Belongs to the EPO/TPO family.</text>
</comment>
<reference key="1">
    <citation type="submission" date="2004-03" db="EMBL/GenBank/DDBJ databases">
        <title>Description of the full length of canine erythropoietin.</title>
        <authorList>
            <person name="Souza D.S."/>
            <person name="Vicentim D.L."/>
            <person name="Costa F.F."/>
            <person name="Saad S.T.O."/>
        </authorList>
    </citation>
    <scope>NUCLEOTIDE SEQUENCE [MRNA]</scope>
    <source>
        <tissue>Kidney</tissue>
    </source>
</reference>
<reference key="2">
    <citation type="journal article" date="1993" name="Blood">
        <title>Erythropoietin structure-function relationships: high degree of sequence homology among mammals.</title>
        <authorList>
            <person name="Wen D."/>
            <person name="Boissel J.-P.R."/>
            <person name="Tracy T.E."/>
            <person name="Gruninger R.H."/>
            <person name="Mulcahy L.S."/>
            <person name="Czelusniak J."/>
            <person name="Goodman M."/>
            <person name="Bunn H.F."/>
        </authorList>
    </citation>
    <scope>NUCLEOTIDE SEQUENCE [MRNA] OF 19-193</scope>
</reference>